<gene>
    <name evidence="1" type="primary">selD</name>
    <name type="ordered locus">Shewmr7_0170</name>
</gene>
<dbReference type="EC" id="2.7.9.3" evidence="1"/>
<dbReference type="EMBL" id="CP000444">
    <property type="protein sequence ID" value="ABI41176.1"/>
    <property type="molecule type" value="Genomic_DNA"/>
</dbReference>
<dbReference type="SMR" id="Q0I0C9"/>
<dbReference type="KEGG" id="shm:Shewmr7_0170"/>
<dbReference type="HOGENOM" id="CLU_032859_0_1_6"/>
<dbReference type="GO" id="GO:0005737">
    <property type="term" value="C:cytoplasm"/>
    <property type="evidence" value="ECO:0007669"/>
    <property type="project" value="TreeGrafter"/>
</dbReference>
<dbReference type="GO" id="GO:0005524">
    <property type="term" value="F:ATP binding"/>
    <property type="evidence" value="ECO:0007669"/>
    <property type="project" value="UniProtKB-UniRule"/>
</dbReference>
<dbReference type="GO" id="GO:0000287">
    <property type="term" value="F:magnesium ion binding"/>
    <property type="evidence" value="ECO:0007669"/>
    <property type="project" value="UniProtKB-UniRule"/>
</dbReference>
<dbReference type="GO" id="GO:0004756">
    <property type="term" value="F:selenide, water dikinase activity"/>
    <property type="evidence" value="ECO:0007669"/>
    <property type="project" value="UniProtKB-UniRule"/>
</dbReference>
<dbReference type="GO" id="GO:0016260">
    <property type="term" value="P:selenocysteine biosynthetic process"/>
    <property type="evidence" value="ECO:0007669"/>
    <property type="project" value="InterPro"/>
</dbReference>
<dbReference type="CDD" id="cd02195">
    <property type="entry name" value="SelD"/>
    <property type="match status" value="1"/>
</dbReference>
<dbReference type="FunFam" id="3.30.1330.10:FF:000003">
    <property type="entry name" value="Selenide, water dikinase"/>
    <property type="match status" value="1"/>
</dbReference>
<dbReference type="FunFam" id="3.90.650.10:FF:000004">
    <property type="entry name" value="Selenide, water dikinase"/>
    <property type="match status" value="1"/>
</dbReference>
<dbReference type="Gene3D" id="3.90.650.10">
    <property type="entry name" value="PurM-like C-terminal domain"/>
    <property type="match status" value="1"/>
</dbReference>
<dbReference type="Gene3D" id="3.30.1330.10">
    <property type="entry name" value="PurM-like, N-terminal domain"/>
    <property type="match status" value="1"/>
</dbReference>
<dbReference type="HAMAP" id="MF_00625">
    <property type="entry name" value="SelD"/>
    <property type="match status" value="1"/>
</dbReference>
<dbReference type="InterPro" id="IPR010918">
    <property type="entry name" value="PurM-like_C_dom"/>
</dbReference>
<dbReference type="InterPro" id="IPR036676">
    <property type="entry name" value="PurM-like_C_sf"/>
</dbReference>
<dbReference type="InterPro" id="IPR016188">
    <property type="entry name" value="PurM-like_N"/>
</dbReference>
<dbReference type="InterPro" id="IPR036921">
    <property type="entry name" value="PurM-like_N_sf"/>
</dbReference>
<dbReference type="InterPro" id="IPR023061">
    <property type="entry name" value="SelD_I"/>
</dbReference>
<dbReference type="InterPro" id="IPR004536">
    <property type="entry name" value="SPS/SelD"/>
</dbReference>
<dbReference type="NCBIfam" id="NF002098">
    <property type="entry name" value="PRK00943.1"/>
    <property type="match status" value="1"/>
</dbReference>
<dbReference type="NCBIfam" id="TIGR00476">
    <property type="entry name" value="selD"/>
    <property type="match status" value="1"/>
</dbReference>
<dbReference type="PANTHER" id="PTHR10256:SF0">
    <property type="entry name" value="INACTIVE SELENIDE, WATER DIKINASE-LIKE PROTEIN-RELATED"/>
    <property type="match status" value="1"/>
</dbReference>
<dbReference type="PANTHER" id="PTHR10256">
    <property type="entry name" value="SELENIDE, WATER DIKINASE"/>
    <property type="match status" value="1"/>
</dbReference>
<dbReference type="Pfam" id="PF00586">
    <property type="entry name" value="AIRS"/>
    <property type="match status" value="1"/>
</dbReference>
<dbReference type="Pfam" id="PF02769">
    <property type="entry name" value="AIRS_C"/>
    <property type="match status" value="1"/>
</dbReference>
<dbReference type="PIRSF" id="PIRSF036407">
    <property type="entry name" value="Selenphspht_syn"/>
    <property type="match status" value="1"/>
</dbReference>
<dbReference type="SUPFAM" id="SSF56042">
    <property type="entry name" value="PurM C-terminal domain-like"/>
    <property type="match status" value="1"/>
</dbReference>
<dbReference type="SUPFAM" id="SSF55326">
    <property type="entry name" value="PurM N-terminal domain-like"/>
    <property type="match status" value="1"/>
</dbReference>
<organism>
    <name type="scientific">Shewanella sp. (strain MR-7)</name>
    <dbReference type="NCBI Taxonomy" id="60481"/>
    <lineage>
        <taxon>Bacteria</taxon>
        <taxon>Pseudomonadati</taxon>
        <taxon>Pseudomonadota</taxon>
        <taxon>Gammaproteobacteria</taxon>
        <taxon>Alteromonadales</taxon>
        <taxon>Shewanellaceae</taxon>
        <taxon>Shewanella</taxon>
    </lineage>
</organism>
<name>SELD_SHESR</name>
<comment type="function">
    <text evidence="1">Synthesizes selenophosphate from selenide and ATP.</text>
</comment>
<comment type="catalytic activity">
    <reaction evidence="1">
        <text>hydrogenselenide + ATP + H2O = selenophosphate + AMP + phosphate + 2 H(+)</text>
        <dbReference type="Rhea" id="RHEA:18737"/>
        <dbReference type="ChEBI" id="CHEBI:15377"/>
        <dbReference type="ChEBI" id="CHEBI:15378"/>
        <dbReference type="ChEBI" id="CHEBI:16144"/>
        <dbReference type="ChEBI" id="CHEBI:29317"/>
        <dbReference type="ChEBI" id="CHEBI:30616"/>
        <dbReference type="ChEBI" id="CHEBI:43474"/>
        <dbReference type="ChEBI" id="CHEBI:456215"/>
        <dbReference type="EC" id="2.7.9.3"/>
    </reaction>
</comment>
<comment type="cofactor">
    <cofactor evidence="1">
        <name>Mg(2+)</name>
        <dbReference type="ChEBI" id="CHEBI:18420"/>
    </cofactor>
    <text evidence="1">Binds 1 Mg(2+) ion per monomer.</text>
</comment>
<comment type="subunit">
    <text evidence="1">Homodimer.</text>
</comment>
<comment type="similarity">
    <text evidence="1">Belongs to the selenophosphate synthase 1 family. Class I subfamily.</text>
</comment>
<keyword id="KW-0067">ATP-binding</keyword>
<keyword id="KW-0418">Kinase</keyword>
<keyword id="KW-0460">Magnesium</keyword>
<keyword id="KW-0479">Metal-binding</keyword>
<keyword id="KW-0547">Nucleotide-binding</keyword>
<keyword id="KW-0711">Selenium</keyword>
<keyword id="KW-0808">Transferase</keyword>
<protein>
    <recommendedName>
        <fullName evidence="1">Selenide, water dikinase</fullName>
        <ecNumber evidence="1">2.7.9.3</ecNumber>
    </recommendedName>
    <alternativeName>
        <fullName evidence="1">Selenium donor protein</fullName>
    </alternativeName>
    <alternativeName>
        <fullName evidence="1">Selenophosphate synthase</fullName>
    </alternativeName>
</protein>
<sequence length="352" mass="36811">MSNSAVSSADSIKLTEYSHGAGCGCKISPKVLTTILASQLPVFTDPNLLVGNQSRDDAAVYKLNDEIGIISTTDFFMPIVDDPFTFGRIAATNAISDIYAMGGTPMMAIAILGWPVNKLPAEIAQQVVDGGRQACMEAGIMLAGGHSIDAPEPIFGLAVTGQIALTDLKQNDTAKAGDRLYLTKPIGIGILTTAQKQKKLKDEDSQIAVNAMCQLNSIGAKIAKITGVNALTDVTGFGLAGHLLEVCQGAKLTAKLDLDSVPLLPRALDYLAQGCIPGGTHRNYDSYGEHLPALTDHQKAILCDPQTSGGLLVAVSSEAEAELVALLNAHQIEPICIGSLETPTSTANVVLC</sequence>
<evidence type="ECO:0000255" key="1">
    <source>
        <dbReference type="HAMAP-Rule" id="MF_00625"/>
    </source>
</evidence>
<proteinExistence type="inferred from homology"/>
<accession>Q0I0C9</accession>
<feature type="chain" id="PRO_1000051606" description="Selenide, water dikinase">
    <location>
        <begin position="1"/>
        <end position="352"/>
    </location>
</feature>
<feature type="active site" evidence="1">
    <location>
        <position position="23"/>
    </location>
</feature>
<feature type="binding site" description="in other chain" evidence="1">
    <location>
        <position position="26"/>
    </location>
    <ligand>
        <name>ATP</name>
        <dbReference type="ChEBI" id="CHEBI:30616"/>
        <note>ligand shared between dimeric partners</note>
    </ligand>
</feature>
<feature type="binding site" description="in other chain" evidence="1">
    <location>
        <begin position="54"/>
        <end position="56"/>
    </location>
    <ligand>
        <name>ATP</name>
        <dbReference type="ChEBI" id="CHEBI:30616"/>
        <note>ligand shared between dimeric partners</note>
    </ligand>
</feature>
<feature type="binding site" evidence="1">
    <location>
        <position position="57"/>
    </location>
    <ligand>
        <name>Mg(2+)</name>
        <dbReference type="ChEBI" id="CHEBI:18420"/>
    </ligand>
</feature>
<feature type="binding site" description="in other chain" evidence="1">
    <location>
        <position position="74"/>
    </location>
    <ligand>
        <name>ATP</name>
        <dbReference type="ChEBI" id="CHEBI:30616"/>
        <note>ligand shared between dimeric partners</note>
    </ligand>
</feature>
<feature type="binding site" description="in other chain" evidence="1">
    <location>
        <position position="97"/>
    </location>
    <ligand>
        <name>ATP</name>
        <dbReference type="ChEBI" id="CHEBI:30616"/>
        <note>ligand shared between dimeric partners</note>
    </ligand>
</feature>
<feature type="binding site" evidence="1">
    <location>
        <position position="97"/>
    </location>
    <ligand>
        <name>Mg(2+)</name>
        <dbReference type="ChEBI" id="CHEBI:18420"/>
    </ligand>
</feature>
<feature type="binding site" evidence="1">
    <location>
        <begin position="145"/>
        <end position="147"/>
    </location>
    <ligand>
        <name>ATP</name>
        <dbReference type="ChEBI" id="CHEBI:30616"/>
        <note>ligand shared between dimeric partners</note>
    </ligand>
</feature>
<feature type="binding site" evidence="1">
    <location>
        <position position="233"/>
    </location>
    <ligand>
        <name>Mg(2+)</name>
        <dbReference type="ChEBI" id="CHEBI:18420"/>
    </ligand>
</feature>
<feature type="site" description="Important for catalytic activity" evidence="1">
    <location>
        <position position="26"/>
    </location>
</feature>
<reference key="1">
    <citation type="submission" date="2006-08" db="EMBL/GenBank/DDBJ databases">
        <title>Complete sequence of chromosome 1 of Shewanella sp. MR-7.</title>
        <authorList>
            <person name="Copeland A."/>
            <person name="Lucas S."/>
            <person name="Lapidus A."/>
            <person name="Barry K."/>
            <person name="Detter J.C."/>
            <person name="Glavina del Rio T."/>
            <person name="Hammon N."/>
            <person name="Israni S."/>
            <person name="Dalin E."/>
            <person name="Tice H."/>
            <person name="Pitluck S."/>
            <person name="Kiss H."/>
            <person name="Brettin T."/>
            <person name="Bruce D."/>
            <person name="Han C."/>
            <person name="Tapia R."/>
            <person name="Gilna P."/>
            <person name="Schmutz J."/>
            <person name="Larimer F."/>
            <person name="Land M."/>
            <person name="Hauser L."/>
            <person name="Kyrpides N."/>
            <person name="Mikhailova N."/>
            <person name="Nealson K."/>
            <person name="Konstantinidis K."/>
            <person name="Klappenbach J."/>
            <person name="Tiedje J."/>
            <person name="Richardson P."/>
        </authorList>
    </citation>
    <scope>NUCLEOTIDE SEQUENCE [LARGE SCALE GENOMIC DNA]</scope>
    <source>
        <strain>MR-7</strain>
    </source>
</reference>